<sequence>MTTSASSSDYSNTEDCISECKSNQSASVGYYPSENTFSYEDVVSPEEAASVESSAHFLPPVQGSWGTESLRRLFRKRDQMKHDPEQFCKLSITLAWDIDVGSDRADSLANLDLNSHSQWMNKWPEDRTKLTPYKLDNLVRKLETFLGKEKGGQHDSHVLPESTQKEDVFLNSSPPPHTAQVSHHEHDACQDLPKHKALENEDICQAPENPPRLLKDEVVEISQADGSSLETSSMSSPRPEDASHLHRTSCMNFQWVFHWLRTQVSSRWRREHPSQAPVSWHQKAMRRMHSFRGNRIQPQE</sequence>
<evidence type="ECO:0000256" key="1">
    <source>
        <dbReference type="SAM" id="MobiDB-lite"/>
    </source>
</evidence>
<name>CL071_RAT</name>
<feature type="chain" id="PRO_0000343579" description="Uncharacterized protein C12orf71 homolog">
    <location>
        <begin position="1"/>
        <end position="300"/>
    </location>
</feature>
<feature type="region of interest" description="Disordered" evidence="1">
    <location>
        <begin position="167"/>
        <end position="186"/>
    </location>
</feature>
<feature type="region of interest" description="Disordered" evidence="1">
    <location>
        <begin position="224"/>
        <end position="244"/>
    </location>
</feature>
<feature type="compositionally biased region" description="Polar residues" evidence="1">
    <location>
        <begin position="224"/>
        <end position="236"/>
    </location>
</feature>
<organism>
    <name type="scientific">Rattus norvegicus</name>
    <name type="common">Rat</name>
    <dbReference type="NCBI Taxonomy" id="10116"/>
    <lineage>
        <taxon>Eukaryota</taxon>
        <taxon>Metazoa</taxon>
        <taxon>Chordata</taxon>
        <taxon>Craniata</taxon>
        <taxon>Vertebrata</taxon>
        <taxon>Euteleostomi</taxon>
        <taxon>Mammalia</taxon>
        <taxon>Eutheria</taxon>
        <taxon>Euarchontoglires</taxon>
        <taxon>Glires</taxon>
        <taxon>Rodentia</taxon>
        <taxon>Myomorpha</taxon>
        <taxon>Muroidea</taxon>
        <taxon>Muridae</taxon>
        <taxon>Murinae</taxon>
        <taxon>Rattus</taxon>
    </lineage>
</organism>
<dbReference type="EMBL" id="BC082012">
    <property type="protein sequence ID" value="AAH82012.1"/>
    <property type="molecule type" value="mRNA"/>
</dbReference>
<dbReference type="RefSeq" id="NP_001037764.1">
    <property type="nucleotide sequence ID" value="NM_001044299.1"/>
</dbReference>
<dbReference type="FunCoup" id="Q66H53">
    <property type="interactions" value="1"/>
</dbReference>
<dbReference type="STRING" id="10116.ENSRNOP00000031574"/>
<dbReference type="PhosphoSitePlus" id="Q66H53"/>
<dbReference type="PaxDb" id="10116-ENSRNOP00000031574"/>
<dbReference type="DNASU" id="690784"/>
<dbReference type="GeneID" id="690784"/>
<dbReference type="KEGG" id="rno:690784"/>
<dbReference type="UCSC" id="RGD:1592184">
    <property type="organism name" value="rat"/>
</dbReference>
<dbReference type="AGR" id="RGD:1592184"/>
<dbReference type="CTD" id="690784"/>
<dbReference type="RGD" id="1592184">
    <property type="gene designation" value="C4h12orf71"/>
</dbReference>
<dbReference type="VEuPathDB" id="HostDB:ENSRNOG00000026864"/>
<dbReference type="eggNOG" id="ENOG502RTYV">
    <property type="taxonomic scope" value="Eukaryota"/>
</dbReference>
<dbReference type="HOGENOM" id="CLU_081160_0_0_1"/>
<dbReference type="InParanoid" id="Q66H53"/>
<dbReference type="OrthoDB" id="9450944at2759"/>
<dbReference type="PhylomeDB" id="Q66H53"/>
<dbReference type="TreeFam" id="TF338465"/>
<dbReference type="PRO" id="PR:Q66H53"/>
<dbReference type="Proteomes" id="UP000002494">
    <property type="component" value="Chromosome 4"/>
</dbReference>
<dbReference type="Bgee" id="ENSRNOG00000026864">
    <property type="expression patterns" value="Expressed in testis"/>
</dbReference>
<dbReference type="ExpressionAtlas" id="Q66H53">
    <property type="expression patterns" value="baseline and differential"/>
</dbReference>
<dbReference type="InterPro" id="IPR027908">
    <property type="entry name" value="DUF4640"/>
</dbReference>
<dbReference type="PANTHER" id="PTHR36462">
    <property type="entry name" value="CHROMOSOME 12 OPEN READING FRAME 71"/>
    <property type="match status" value="1"/>
</dbReference>
<dbReference type="PANTHER" id="PTHR36462:SF1">
    <property type="entry name" value="CHROMOSOME 12 OPEN READING FRAME 71"/>
    <property type="match status" value="1"/>
</dbReference>
<dbReference type="Pfam" id="PF15480">
    <property type="entry name" value="DUF4640"/>
    <property type="match status" value="1"/>
</dbReference>
<protein>
    <recommendedName>
        <fullName>Uncharacterized protein C12orf71 homolog</fullName>
    </recommendedName>
</protein>
<accession>Q66H53</accession>
<proteinExistence type="evidence at transcript level"/>
<keyword id="KW-1185">Reference proteome</keyword>
<reference key="1">
    <citation type="journal article" date="2004" name="Genome Res.">
        <title>The status, quality, and expansion of the NIH full-length cDNA project: the Mammalian Gene Collection (MGC).</title>
        <authorList>
            <consortium name="The MGC Project Team"/>
        </authorList>
    </citation>
    <scope>NUCLEOTIDE SEQUENCE [LARGE SCALE MRNA]</scope>
    <source>
        <tissue>Testis</tissue>
    </source>
</reference>